<gene>
    <name evidence="1" type="primary">rplB</name>
    <name type="ordered locus">BH0137</name>
</gene>
<evidence type="ECO:0000255" key="1">
    <source>
        <dbReference type="HAMAP-Rule" id="MF_01320"/>
    </source>
</evidence>
<evidence type="ECO:0000256" key="2">
    <source>
        <dbReference type="SAM" id="MobiDB-lite"/>
    </source>
</evidence>
<evidence type="ECO:0000305" key="3"/>
<accession>Q9Z9L1</accession>
<accession>Q9JPY3</accession>
<reference key="1">
    <citation type="journal article" date="1999" name="Biosci. Biotechnol. Biochem.">
        <title>Sequence analysis of a 32-kb region including the major ribosomal protein gene clusters from alkaliphilic Bacillus sp. strain C-125.</title>
        <authorList>
            <person name="Takami H."/>
            <person name="Takaki Y."/>
            <person name="Nakasone K."/>
            <person name="Hirama C."/>
            <person name="Inoue A."/>
            <person name="Horikoshi K."/>
        </authorList>
    </citation>
    <scope>NUCLEOTIDE SEQUENCE [GENOMIC DNA]</scope>
    <source>
        <strain>ATCC BAA-125 / DSM 18197 / FERM 7344 / JCM 9153 / C-125</strain>
    </source>
</reference>
<reference key="2">
    <citation type="journal article" date="2000" name="Nucleic Acids Res.">
        <title>Complete genome sequence of the alkaliphilic bacterium Bacillus halodurans and genomic sequence comparison with Bacillus subtilis.</title>
        <authorList>
            <person name="Takami H."/>
            <person name="Nakasone K."/>
            <person name="Takaki Y."/>
            <person name="Maeno G."/>
            <person name="Sasaki R."/>
            <person name="Masui N."/>
            <person name="Fuji F."/>
            <person name="Hirama C."/>
            <person name="Nakamura Y."/>
            <person name="Ogasawara N."/>
            <person name="Kuhara S."/>
            <person name="Horikoshi K."/>
        </authorList>
    </citation>
    <scope>NUCLEOTIDE SEQUENCE [LARGE SCALE GENOMIC DNA]</scope>
    <source>
        <strain>ATCC BAA-125 / DSM 18197 / FERM 7344 / JCM 9153 / C-125</strain>
    </source>
</reference>
<keyword id="KW-1185">Reference proteome</keyword>
<keyword id="KW-0687">Ribonucleoprotein</keyword>
<keyword id="KW-0689">Ribosomal protein</keyword>
<keyword id="KW-0694">RNA-binding</keyword>
<keyword id="KW-0699">rRNA-binding</keyword>
<feature type="chain" id="PRO_0000129527" description="Large ribosomal subunit protein uL2">
    <location>
        <begin position="1"/>
        <end position="276"/>
    </location>
</feature>
<feature type="region of interest" description="Disordered" evidence="2">
    <location>
        <begin position="36"/>
        <end position="58"/>
    </location>
</feature>
<feature type="region of interest" description="Disordered" evidence="2">
    <location>
        <begin position="214"/>
        <end position="276"/>
    </location>
</feature>
<proteinExistence type="inferred from homology"/>
<protein>
    <recommendedName>
        <fullName evidence="1">Large ribosomal subunit protein uL2</fullName>
    </recommendedName>
    <alternativeName>
        <fullName evidence="3">50S ribosomal protein L2</fullName>
    </alternativeName>
</protein>
<comment type="function">
    <text evidence="1">One of the primary rRNA binding proteins. Required for association of the 30S and 50S subunits to form the 70S ribosome, for tRNA binding and peptide bond formation. It has been suggested to have peptidyltransferase activity; this is somewhat controversial. Makes several contacts with the 16S rRNA in the 70S ribosome.</text>
</comment>
<comment type="subunit">
    <text evidence="1">Part of the 50S ribosomal subunit. Forms a bridge to the 30S subunit in the 70S ribosome.</text>
</comment>
<comment type="similarity">
    <text evidence="1">Belongs to the universal ribosomal protein uL2 family.</text>
</comment>
<dbReference type="EMBL" id="AB017508">
    <property type="protein sequence ID" value="BAA75274.1"/>
    <property type="molecule type" value="Genomic_DNA"/>
</dbReference>
<dbReference type="EMBL" id="BA000004">
    <property type="protein sequence ID" value="BAB03856.1"/>
    <property type="molecule type" value="Genomic_DNA"/>
</dbReference>
<dbReference type="PIR" id="T44386">
    <property type="entry name" value="T44386"/>
</dbReference>
<dbReference type="RefSeq" id="WP_010896320.1">
    <property type="nucleotide sequence ID" value="NC_002570.2"/>
</dbReference>
<dbReference type="SMR" id="Q9Z9L1"/>
<dbReference type="STRING" id="272558.gene:10725977"/>
<dbReference type="GeneID" id="87595678"/>
<dbReference type="KEGG" id="bha:BH0137"/>
<dbReference type="eggNOG" id="COG0090">
    <property type="taxonomic scope" value="Bacteria"/>
</dbReference>
<dbReference type="HOGENOM" id="CLU_036235_2_1_9"/>
<dbReference type="OrthoDB" id="9778722at2"/>
<dbReference type="Proteomes" id="UP000001258">
    <property type="component" value="Chromosome"/>
</dbReference>
<dbReference type="GO" id="GO:0015934">
    <property type="term" value="C:large ribosomal subunit"/>
    <property type="evidence" value="ECO:0007669"/>
    <property type="project" value="InterPro"/>
</dbReference>
<dbReference type="GO" id="GO:0019843">
    <property type="term" value="F:rRNA binding"/>
    <property type="evidence" value="ECO:0007669"/>
    <property type="project" value="UniProtKB-UniRule"/>
</dbReference>
<dbReference type="GO" id="GO:0003735">
    <property type="term" value="F:structural constituent of ribosome"/>
    <property type="evidence" value="ECO:0007669"/>
    <property type="project" value="InterPro"/>
</dbReference>
<dbReference type="GO" id="GO:0016740">
    <property type="term" value="F:transferase activity"/>
    <property type="evidence" value="ECO:0007669"/>
    <property type="project" value="InterPro"/>
</dbReference>
<dbReference type="GO" id="GO:0002181">
    <property type="term" value="P:cytoplasmic translation"/>
    <property type="evidence" value="ECO:0007669"/>
    <property type="project" value="TreeGrafter"/>
</dbReference>
<dbReference type="FunFam" id="2.30.30.30:FF:000001">
    <property type="entry name" value="50S ribosomal protein L2"/>
    <property type="match status" value="1"/>
</dbReference>
<dbReference type="FunFam" id="2.40.50.140:FF:000003">
    <property type="entry name" value="50S ribosomal protein L2"/>
    <property type="match status" value="1"/>
</dbReference>
<dbReference type="FunFam" id="4.10.950.10:FF:000001">
    <property type="entry name" value="50S ribosomal protein L2"/>
    <property type="match status" value="1"/>
</dbReference>
<dbReference type="Gene3D" id="2.30.30.30">
    <property type="match status" value="1"/>
</dbReference>
<dbReference type="Gene3D" id="2.40.50.140">
    <property type="entry name" value="Nucleic acid-binding proteins"/>
    <property type="match status" value="1"/>
</dbReference>
<dbReference type="Gene3D" id="4.10.950.10">
    <property type="entry name" value="Ribosomal protein L2, domain 3"/>
    <property type="match status" value="1"/>
</dbReference>
<dbReference type="HAMAP" id="MF_01320_B">
    <property type="entry name" value="Ribosomal_uL2_B"/>
    <property type="match status" value="1"/>
</dbReference>
<dbReference type="InterPro" id="IPR012340">
    <property type="entry name" value="NA-bd_OB-fold"/>
</dbReference>
<dbReference type="InterPro" id="IPR014722">
    <property type="entry name" value="Rib_uL2_dom2"/>
</dbReference>
<dbReference type="InterPro" id="IPR002171">
    <property type="entry name" value="Ribosomal_uL2"/>
</dbReference>
<dbReference type="InterPro" id="IPR005880">
    <property type="entry name" value="Ribosomal_uL2_bac/org-type"/>
</dbReference>
<dbReference type="InterPro" id="IPR022669">
    <property type="entry name" value="Ribosomal_uL2_C"/>
</dbReference>
<dbReference type="InterPro" id="IPR022671">
    <property type="entry name" value="Ribosomal_uL2_CS"/>
</dbReference>
<dbReference type="InterPro" id="IPR014726">
    <property type="entry name" value="Ribosomal_uL2_dom3"/>
</dbReference>
<dbReference type="InterPro" id="IPR022666">
    <property type="entry name" value="Ribosomal_uL2_RNA-bd_dom"/>
</dbReference>
<dbReference type="InterPro" id="IPR008991">
    <property type="entry name" value="Translation_prot_SH3-like_sf"/>
</dbReference>
<dbReference type="NCBIfam" id="TIGR01171">
    <property type="entry name" value="rplB_bact"/>
    <property type="match status" value="1"/>
</dbReference>
<dbReference type="PANTHER" id="PTHR13691:SF5">
    <property type="entry name" value="LARGE RIBOSOMAL SUBUNIT PROTEIN UL2M"/>
    <property type="match status" value="1"/>
</dbReference>
<dbReference type="PANTHER" id="PTHR13691">
    <property type="entry name" value="RIBOSOMAL PROTEIN L2"/>
    <property type="match status" value="1"/>
</dbReference>
<dbReference type="Pfam" id="PF00181">
    <property type="entry name" value="Ribosomal_L2"/>
    <property type="match status" value="1"/>
</dbReference>
<dbReference type="Pfam" id="PF03947">
    <property type="entry name" value="Ribosomal_L2_C"/>
    <property type="match status" value="1"/>
</dbReference>
<dbReference type="PIRSF" id="PIRSF002158">
    <property type="entry name" value="Ribosomal_L2"/>
    <property type="match status" value="1"/>
</dbReference>
<dbReference type="SMART" id="SM01383">
    <property type="entry name" value="Ribosomal_L2"/>
    <property type="match status" value="1"/>
</dbReference>
<dbReference type="SMART" id="SM01382">
    <property type="entry name" value="Ribosomal_L2_C"/>
    <property type="match status" value="1"/>
</dbReference>
<dbReference type="SUPFAM" id="SSF50249">
    <property type="entry name" value="Nucleic acid-binding proteins"/>
    <property type="match status" value="1"/>
</dbReference>
<dbReference type="SUPFAM" id="SSF50104">
    <property type="entry name" value="Translation proteins SH3-like domain"/>
    <property type="match status" value="1"/>
</dbReference>
<dbReference type="PROSITE" id="PS00467">
    <property type="entry name" value="RIBOSOMAL_L2"/>
    <property type="match status" value="1"/>
</dbReference>
<name>RL2_HALH5</name>
<sequence length="276" mass="30224">MAIKKYKPTSAGRRGMSTLDFAEITTDKPEKSLLAPLHKKGGRNNQGKMTVRHQGGGHKRQYRIIDFKRNKDGIPGRVATIEYDPNRSANIALINYVDGEKRYILAPKGLKVGMTIESGPEADIKVGNALPLKNIPVGTVIHNIELKPGKGGQLVRSAGAEAQLLGKEGDYVLVRLNSGETRYILATCRATIGQVGNLEHELVNIGKAGRSRWLGKRPTVRGSAMNPNDHPHGGGEGRAPIGRKSPMSPWGKPTLGYKTRKKNKASDKYIVRRRKK</sequence>
<organism>
    <name type="scientific">Halalkalibacterium halodurans (strain ATCC BAA-125 / DSM 18197 / FERM 7344 / JCM 9153 / C-125)</name>
    <name type="common">Bacillus halodurans</name>
    <dbReference type="NCBI Taxonomy" id="272558"/>
    <lineage>
        <taxon>Bacteria</taxon>
        <taxon>Bacillati</taxon>
        <taxon>Bacillota</taxon>
        <taxon>Bacilli</taxon>
        <taxon>Bacillales</taxon>
        <taxon>Bacillaceae</taxon>
        <taxon>Halalkalibacterium (ex Joshi et al. 2022)</taxon>
    </lineage>
</organism>